<organism>
    <name type="scientific">Sinorhizobium fredii (strain NBRC 101917 / NGR234)</name>
    <dbReference type="NCBI Taxonomy" id="394"/>
    <lineage>
        <taxon>Bacteria</taxon>
        <taxon>Pseudomonadati</taxon>
        <taxon>Pseudomonadota</taxon>
        <taxon>Alphaproteobacteria</taxon>
        <taxon>Hyphomicrobiales</taxon>
        <taxon>Rhizobiaceae</taxon>
        <taxon>Sinorhizobium/Ensifer group</taxon>
        <taxon>Sinorhizobium</taxon>
    </lineage>
</organism>
<reference key="1">
    <citation type="journal article" date="1996" name="Genome Res.">
        <title>Sequencing the 500-kb GC-rich symbiotic replicon of Rhizobium sp. NGR234 using dye terminators and a thermostable 'sequenase': a beginning.</title>
        <authorList>
            <person name="Freiberg C."/>
            <person name="Perret X."/>
            <person name="Broughton W.J."/>
            <person name="Rosenthal A."/>
        </authorList>
    </citation>
    <scope>NUCLEOTIDE SEQUENCE [GENOMIC DNA]</scope>
</reference>
<reference key="2">
    <citation type="journal article" date="1997" name="Nature">
        <title>Molecular basis of symbiosis between Rhizobium and legumes.</title>
        <authorList>
            <person name="Freiberg C.A."/>
            <person name="Fellay R."/>
            <person name="Bairoch A."/>
            <person name="Broughton W.J."/>
            <person name="Rosenthal A."/>
            <person name="Perret X."/>
        </authorList>
    </citation>
    <scope>NUCLEOTIDE SEQUENCE [LARGE SCALE GENOMIC DNA]</scope>
    <source>
        <strain>NBRC 101917 / NGR234</strain>
    </source>
</reference>
<reference key="3">
    <citation type="journal article" date="2009" name="Appl. Environ. Microbiol.">
        <title>Rhizobium sp. strain NGR234 possesses a remarkable number of secretion systems.</title>
        <authorList>
            <person name="Schmeisser C."/>
            <person name="Liesegang H."/>
            <person name="Krysciak D."/>
            <person name="Bakkou N."/>
            <person name="Le Quere A."/>
            <person name="Wollherr A."/>
            <person name="Heinemeyer I."/>
            <person name="Morgenstern B."/>
            <person name="Pommerening-Roeser A."/>
            <person name="Flores M."/>
            <person name="Palacios R."/>
            <person name="Brenner S."/>
            <person name="Gottschalk G."/>
            <person name="Schmitz R.A."/>
            <person name="Broughton W.J."/>
            <person name="Perret X."/>
            <person name="Strittmatter A.W."/>
            <person name="Streit W.R."/>
        </authorList>
    </citation>
    <scope>NUCLEOTIDE SEQUENCE [LARGE SCALE GENOMIC DNA]</scope>
    <source>
        <strain>NBRC 101917 / NGR234</strain>
    </source>
</reference>
<gene>
    <name type="ordered locus">NGR_a01330</name>
    <name type="ORF">y4uG</name>
</gene>
<proteinExistence type="predicted"/>
<geneLocation type="plasmid">
    <name>sym pNGR234a</name>
</geneLocation>
<keyword id="KW-0472">Membrane</keyword>
<keyword id="KW-0614">Plasmid</keyword>
<keyword id="KW-1185">Reference proteome</keyword>
<keyword id="KW-0812">Transmembrane</keyword>
<keyword id="KW-1133">Transmembrane helix</keyword>
<evidence type="ECO:0000255" key="1"/>
<evidence type="ECO:0000305" key="2"/>
<feature type="chain" id="PRO_0000200951" description="Uncharacterized protein y4uG">
    <location>
        <begin position="1"/>
        <end position="71"/>
    </location>
</feature>
<feature type="transmembrane region" description="Helical" evidence="1">
    <location>
        <begin position="12"/>
        <end position="32"/>
    </location>
</feature>
<sequence>MPRGSAERSLSFLVSIAFFGLAPTIPLLAIALWHVSWFDGHGDEQMGADSDDRAHAFQSDAAHRSDLIARM</sequence>
<accession>P55671</accession>
<protein>
    <recommendedName>
        <fullName>Uncharacterized protein y4uG</fullName>
    </recommendedName>
</protein>
<dbReference type="EMBL" id="Z68203">
    <property type="status" value="NOT_ANNOTATED_CDS"/>
    <property type="molecule type" value="Genomic_DNA"/>
</dbReference>
<dbReference type="EMBL" id="U00090">
    <property type="protein sequence ID" value="AAB91879.1"/>
    <property type="molecule type" value="Genomic_DNA"/>
</dbReference>
<dbReference type="RefSeq" id="NP_444092.1">
    <property type="nucleotide sequence ID" value="NC_000914.2"/>
</dbReference>
<dbReference type="KEGG" id="rhi:NGR_a01330"/>
<dbReference type="HOGENOM" id="CLU_2737306_0_0_5"/>
<dbReference type="Proteomes" id="UP000001054">
    <property type="component" value="Plasmid pNGR234a"/>
</dbReference>
<dbReference type="GO" id="GO:0016020">
    <property type="term" value="C:membrane"/>
    <property type="evidence" value="ECO:0007669"/>
    <property type="project" value="UniProtKB-SubCell"/>
</dbReference>
<name>Y4UG_SINFN</name>
<comment type="subcellular location">
    <subcellularLocation>
        <location evidence="2">Membrane</location>
        <topology evidence="2">Single-pass membrane protein</topology>
    </subcellularLocation>
</comment>